<feature type="initiator methionine" description="Removed" evidence="1">
    <location>
        <position position="1"/>
    </location>
</feature>
<feature type="chain" id="PRO_0000294370" description="Malate dehydrogenase">
    <location>
        <begin position="2"/>
        <end position="328"/>
    </location>
</feature>
<feature type="active site" description="Proton acceptor" evidence="2">
    <location>
        <position position="190"/>
    </location>
</feature>
<feature type="binding site" evidence="2">
    <location>
        <begin position="12"/>
        <end position="18"/>
    </location>
    <ligand>
        <name>NAD(+)</name>
        <dbReference type="ChEBI" id="CHEBI:57540"/>
    </ligand>
</feature>
<feature type="binding site" evidence="2">
    <location>
        <position position="95"/>
    </location>
    <ligand>
        <name>substrate</name>
    </ligand>
</feature>
<feature type="binding site" evidence="2">
    <location>
        <position position="101"/>
    </location>
    <ligand>
        <name>substrate</name>
    </ligand>
</feature>
<feature type="binding site" evidence="2">
    <location>
        <position position="108"/>
    </location>
    <ligand>
        <name>NAD(+)</name>
        <dbReference type="ChEBI" id="CHEBI:57540"/>
    </ligand>
</feature>
<feature type="binding site" evidence="2">
    <location>
        <position position="115"/>
    </location>
    <ligand>
        <name>NAD(+)</name>
        <dbReference type="ChEBI" id="CHEBI:57540"/>
    </ligand>
</feature>
<feature type="binding site" evidence="2">
    <location>
        <begin position="132"/>
        <end position="134"/>
    </location>
    <ligand>
        <name>NAD(+)</name>
        <dbReference type="ChEBI" id="CHEBI:57540"/>
    </ligand>
</feature>
<feature type="binding site" evidence="2">
    <location>
        <position position="134"/>
    </location>
    <ligand>
        <name>substrate</name>
    </ligand>
</feature>
<feature type="binding site" evidence="2">
    <location>
        <position position="165"/>
    </location>
    <ligand>
        <name>substrate</name>
    </ligand>
</feature>
<keyword id="KW-0520">NAD</keyword>
<keyword id="KW-0560">Oxidoreductase</keyword>
<keyword id="KW-0816">Tricarboxylic acid cycle</keyword>
<evidence type="ECO:0000250" key="1"/>
<evidence type="ECO:0000255" key="2">
    <source>
        <dbReference type="HAMAP-Rule" id="MF_01517"/>
    </source>
</evidence>
<name>MDH_PARC0</name>
<reference key="1">
    <citation type="submission" date="2006-12" db="EMBL/GenBank/DDBJ databases">
        <title>Complete sequence of Acidovorax avenae subsp. citrulli AAC00-1.</title>
        <authorList>
            <person name="Copeland A."/>
            <person name="Lucas S."/>
            <person name="Lapidus A."/>
            <person name="Barry K."/>
            <person name="Detter J.C."/>
            <person name="Glavina del Rio T."/>
            <person name="Dalin E."/>
            <person name="Tice H."/>
            <person name="Pitluck S."/>
            <person name="Kiss H."/>
            <person name="Brettin T."/>
            <person name="Bruce D."/>
            <person name="Han C."/>
            <person name="Tapia R."/>
            <person name="Gilna P."/>
            <person name="Schmutz J."/>
            <person name="Larimer F."/>
            <person name="Land M."/>
            <person name="Hauser L."/>
            <person name="Kyrpides N."/>
            <person name="Kim E."/>
            <person name="Stahl D."/>
            <person name="Richardson P."/>
        </authorList>
    </citation>
    <scope>NUCLEOTIDE SEQUENCE [LARGE SCALE GENOMIC DNA]</scope>
    <source>
        <strain>AAC00-1</strain>
    </source>
</reference>
<proteinExistence type="inferred from homology"/>
<protein>
    <recommendedName>
        <fullName evidence="2">Malate dehydrogenase</fullName>
        <ecNumber evidence="2">1.1.1.37</ecNumber>
    </recommendedName>
</protein>
<comment type="function">
    <text evidence="2">Catalyzes the reversible oxidation of malate to oxaloacetate.</text>
</comment>
<comment type="catalytic activity">
    <reaction evidence="2">
        <text>(S)-malate + NAD(+) = oxaloacetate + NADH + H(+)</text>
        <dbReference type="Rhea" id="RHEA:21432"/>
        <dbReference type="ChEBI" id="CHEBI:15378"/>
        <dbReference type="ChEBI" id="CHEBI:15589"/>
        <dbReference type="ChEBI" id="CHEBI:16452"/>
        <dbReference type="ChEBI" id="CHEBI:57540"/>
        <dbReference type="ChEBI" id="CHEBI:57945"/>
        <dbReference type="EC" id="1.1.1.37"/>
    </reaction>
</comment>
<comment type="similarity">
    <text evidence="2">Belongs to the LDH/MDH superfamily. MDH type 2 family.</text>
</comment>
<accession>A1TP96</accession>
<dbReference type="EC" id="1.1.1.37" evidence="2"/>
<dbReference type="EMBL" id="CP000512">
    <property type="protein sequence ID" value="ABM32784.1"/>
    <property type="molecule type" value="Genomic_DNA"/>
</dbReference>
<dbReference type="RefSeq" id="WP_011795320.1">
    <property type="nucleotide sequence ID" value="NC_008752.1"/>
</dbReference>
<dbReference type="SMR" id="A1TP96"/>
<dbReference type="STRING" id="397945.Aave_2206"/>
<dbReference type="GeneID" id="79792485"/>
<dbReference type="KEGG" id="aav:Aave_2206"/>
<dbReference type="eggNOG" id="COG0039">
    <property type="taxonomic scope" value="Bacteria"/>
</dbReference>
<dbReference type="HOGENOM" id="CLU_040727_2_0_4"/>
<dbReference type="OrthoDB" id="9802969at2"/>
<dbReference type="Proteomes" id="UP000002596">
    <property type="component" value="Chromosome"/>
</dbReference>
<dbReference type="GO" id="GO:0030060">
    <property type="term" value="F:L-malate dehydrogenase (NAD+) activity"/>
    <property type="evidence" value="ECO:0007669"/>
    <property type="project" value="UniProtKB-UniRule"/>
</dbReference>
<dbReference type="GO" id="GO:0006108">
    <property type="term" value="P:malate metabolic process"/>
    <property type="evidence" value="ECO:0007669"/>
    <property type="project" value="InterPro"/>
</dbReference>
<dbReference type="GO" id="GO:0006099">
    <property type="term" value="P:tricarboxylic acid cycle"/>
    <property type="evidence" value="ECO:0007669"/>
    <property type="project" value="UniProtKB-UniRule"/>
</dbReference>
<dbReference type="CDD" id="cd01338">
    <property type="entry name" value="MDH_chloroplast-like"/>
    <property type="match status" value="1"/>
</dbReference>
<dbReference type="FunFam" id="3.40.50.720:FF:000010">
    <property type="entry name" value="Malate dehydrogenase"/>
    <property type="match status" value="1"/>
</dbReference>
<dbReference type="FunFam" id="3.90.110.10:FF:000002">
    <property type="entry name" value="Malate dehydrogenase"/>
    <property type="match status" value="1"/>
</dbReference>
<dbReference type="Gene3D" id="3.90.110.10">
    <property type="entry name" value="Lactate dehydrogenase/glycoside hydrolase, family 4, C-terminal"/>
    <property type="match status" value="1"/>
</dbReference>
<dbReference type="Gene3D" id="3.40.50.720">
    <property type="entry name" value="NAD(P)-binding Rossmann-like Domain"/>
    <property type="match status" value="1"/>
</dbReference>
<dbReference type="HAMAP" id="MF_01517">
    <property type="entry name" value="Malate_dehydrog_2"/>
    <property type="match status" value="1"/>
</dbReference>
<dbReference type="InterPro" id="IPR001557">
    <property type="entry name" value="L-lactate/malate_DH"/>
</dbReference>
<dbReference type="InterPro" id="IPR022383">
    <property type="entry name" value="Lactate/malate_DH_C"/>
</dbReference>
<dbReference type="InterPro" id="IPR001236">
    <property type="entry name" value="Lactate/malate_DH_N"/>
</dbReference>
<dbReference type="InterPro" id="IPR015955">
    <property type="entry name" value="Lactate_DH/Glyco_Ohase_4_C"/>
</dbReference>
<dbReference type="InterPro" id="IPR010945">
    <property type="entry name" value="Malate_DH_type2"/>
</dbReference>
<dbReference type="InterPro" id="IPR036291">
    <property type="entry name" value="NAD(P)-bd_dom_sf"/>
</dbReference>
<dbReference type="NCBIfam" id="TIGR01759">
    <property type="entry name" value="MalateDH-SF1"/>
    <property type="match status" value="1"/>
</dbReference>
<dbReference type="NCBIfam" id="NF003916">
    <property type="entry name" value="PRK05442.1"/>
    <property type="match status" value="1"/>
</dbReference>
<dbReference type="PANTHER" id="PTHR23382">
    <property type="entry name" value="MALATE DEHYDROGENASE"/>
    <property type="match status" value="1"/>
</dbReference>
<dbReference type="Pfam" id="PF02866">
    <property type="entry name" value="Ldh_1_C"/>
    <property type="match status" value="1"/>
</dbReference>
<dbReference type="Pfam" id="PF00056">
    <property type="entry name" value="Ldh_1_N"/>
    <property type="match status" value="1"/>
</dbReference>
<dbReference type="PIRSF" id="PIRSF000102">
    <property type="entry name" value="Lac_mal_DH"/>
    <property type="match status" value="1"/>
</dbReference>
<dbReference type="SUPFAM" id="SSF56327">
    <property type="entry name" value="LDH C-terminal domain-like"/>
    <property type="match status" value="1"/>
</dbReference>
<dbReference type="SUPFAM" id="SSF51735">
    <property type="entry name" value="NAD(P)-binding Rossmann-fold domains"/>
    <property type="match status" value="1"/>
</dbReference>
<organism>
    <name type="scientific">Paracidovorax citrulli (strain AAC00-1)</name>
    <name type="common">Acidovorax citrulli</name>
    <dbReference type="NCBI Taxonomy" id="397945"/>
    <lineage>
        <taxon>Bacteria</taxon>
        <taxon>Pseudomonadati</taxon>
        <taxon>Pseudomonadota</taxon>
        <taxon>Betaproteobacteria</taxon>
        <taxon>Burkholderiales</taxon>
        <taxon>Comamonadaceae</taxon>
        <taxon>Paracidovorax</taxon>
    </lineage>
</organism>
<gene>
    <name evidence="2" type="primary">mdh</name>
    <name type="ordered locus">Aave_2206</name>
</gene>
<sequence length="328" mass="34977">MSKKPVRVAVTGAAGQIGYALLFRIASGEMLGKDQPVILQLLEIPDEKAQKALKGVMMELEDCAFPLLAGMEAHSDPMTAFKDTDYALLVGARPRGPGMERADLLAANAQIFTAQGKALNAVASRNVKVLVVGNPANTNAYIAMKSAPDLPAKNFTAMLRLDHNRAASQIAAKTGGKVGEIEKLTVWGNHSPTMYADYRFATIGGKSVKDAINDQVWNADVFLPTVGKRGAAIIEARGLSSAASAANAAIDHMRDWALGSNGKWVTMGVPSKGEYGIPEGIVFGFPVITENGEYKIVEGLEIDAFSQERINKTLAELQGEQDGVKHLL</sequence>